<accession>P19300</accession>
<reference key="1">
    <citation type="submission" date="1989-03" db="EMBL/GenBank/DDBJ databases">
        <authorList>
            <person name="Neumann H."/>
        </authorList>
    </citation>
    <scope>NUCLEOTIDE SEQUENCE [GENOMIC DNA]</scope>
</reference>
<keyword id="KW-1185">Reference proteome</keyword>
<organismHost>
    <name type="scientific">Thermoproteus tenax</name>
    <dbReference type="NCBI Taxonomy" id="2271"/>
</organismHost>
<organism>
    <name type="scientific">Thermoproteus tenax virus 1 (strain KRA1)</name>
    <name type="common">TTV1</name>
    <dbReference type="NCBI Taxonomy" id="10480"/>
    <lineage>
        <taxon>Viruses</taxon>
        <taxon>Adnaviria</taxon>
        <taxon>Zilligvirae</taxon>
        <taxon>Taleaviricota</taxon>
        <taxon>Tokiviricetes</taxon>
        <taxon>Primavirales</taxon>
        <taxon>Tristromaviridae</taxon>
        <taxon>Betatristromavirus</taxon>
        <taxon>Betatristromavirus TTV1</taxon>
    </lineage>
</organism>
<dbReference type="EMBL" id="X14855">
    <property type="protein sequence ID" value="CAA32996.1"/>
    <property type="molecule type" value="Genomic_DNA"/>
</dbReference>
<dbReference type="Proteomes" id="UP000009250">
    <property type="component" value="Genome"/>
</dbReference>
<protein>
    <recommendedName>
        <fullName>Uncharacterized 20.2 kDa protein</fullName>
    </recommendedName>
</protein>
<name>YORP_TTV1K</name>
<feature type="chain" id="PRO_0000222982" description="Uncharacterized 20.2 kDa protein">
    <location>
        <begin position="1"/>
        <end position="182"/>
    </location>
</feature>
<sequence>MSDVGYCSPPGKNNSDYLTAFHCVSREMCNIVSNIQLSDGTKVNVIKTPYMKHCSNILCRLLFEIGLNRLFPMCIEDEDLAWISAGNNIGPTKGVLFAGSLGSIYGSIAIFSGDLIVGKKYKVISRDFYIGKTIEWETTINGKGIFYVLYENGKGIWIRGYYSFPTQVRIKPGFSGSPVIEE</sequence>
<proteinExistence type="predicted"/>